<feature type="chain" id="PRO_1000081614" description="Large ribosomal subunit protein bL35">
    <location>
        <begin position="1"/>
        <end position="64"/>
    </location>
</feature>
<feature type="region of interest" description="Disordered" evidence="2">
    <location>
        <begin position="1"/>
        <end position="48"/>
    </location>
</feature>
<feature type="compositionally biased region" description="Basic residues" evidence="2">
    <location>
        <begin position="1"/>
        <end position="44"/>
    </location>
</feature>
<evidence type="ECO:0000255" key="1">
    <source>
        <dbReference type="HAMAP-Rule" id="MF_00514"/>
    </source>
</evidence>
<evidence type="ECO:0000256" key="2">
    <source>
        <dbReference type="SAM" id="MobiDB-lite"/>
    </source>
</evidence>
<evidence type="ECO:0000305" key="3"/>
<sequence length="64" mass="7415">MSKIKSHSGAAKRFKRTANGFKHKQSHTSHILTKKSTKRKRHLRSMNQIAQSDKALIVRMLPYI</sequence>
<protein>
    <recommendedName>
        <fullName evidence="1">Large ribosomal subunit protein bL35</fullName>
    </recommendedName>
    <alternativeName>
        <fullName evidence="3">50S ribosomal protein L35</fullName>
    </alternativeName>
</protein>
<reference key="1">
    <citation type="submission" date="2007-06" db="EMBL/GenBank/DDBJ databases">
        <title>Complete sequence of Marinomonas sp. MWYL1.</title>
        <authorList>
            <consortium name="US DOE Joint Genome Institute"/>
            <person name="Copeland A."/>
            <person name="Lucas S."/>
            <person name="Lapidus A."/>
            <person name="Barry K."/>
            <person name="Glavina del Rio T."/>
            <person name="Dalin E."/>
            <person name="Tice H."/>
            <person name="Pitluck S."/>
            <person name="Kiss H."/>
            <person name="Brettin T."/>
            <person name="Bruce D."/>
            <person name="Detter J.C."/>
            <person name="Han C."/>
            <person name="Schmutz J."/>
            <person name="Larimer F."/>
            <person name="Land M."/>
            <person name="Hauser L."/>
            <person name="Kyrpides N."/>
            <person name="Kim E."/>
            <person name="Johnston A.W.B."/>
            <person name="Todd J.D."/>
            <person name="Rogers R."/>
            <person name="Wexler M."/>
            <person name="Bond P.L."/>
            <person name="Li Y."/>
            <person name="Richardson P."/>
        </authorList>
    </citation>
    <scope>NUCLEOTIDE SEQUENCE [LARGE SCALE GENOMIC DNA]</scope>
    <source>
        <strain>MWYL1</strain>
    </source>
</reference>
<accession>A6VYH9</accession>
<gene>
    <name evidence="1" type="primary">rpmI</name>
    <name type="ordered locus">Mmwyl1_2595</name>
</gene>
<name>RL35_MARMS</name>
<dbReference type="EMBL" id="CP000749">
    <property type="protein sequence ID" value="ABR71508.1"/>
    <property type="molecule type" value="Genomic_DNA"/>
</dbReference>
<dbReference type="SMR" id="A6VYH9"/>
<dbReference type="STRING" id="400668.Mmwyl1_2595"/>
<dbReference type="KEGG" id="mmw:Mmwyl1_2595"/>
<dbReference type="eggNOG" id="COG0291">
    <property type="taxonomic scope" value="Bacteria"/>
</dbReference>
<dbReference type="HOGENOM" id="CLU_169643_1_1_6"/>
<dbReference type="OrthoDB" id="47476at2"/>
<dbReference type="GO" id="GO:0022625">
    <property type="term" value="C:cytosolic large ribosomal subunit"/>
    <property type="evidence" value="ECO:0007669"/>
    <property type="project" value="TreeGrafter"/>
</dbReference>
<dbReference type="GO" id="GO:0003735">
    <property type="term" value="F:structural constituent of ribosome"/>
    <property type="evidence" value="ECO:0007669"/>
    <property type="project" value="InterPro"/>
</dbReference>
<dbReference type="GO" id="GO:0006412">
    <property type="term" value="P:translation"/>
    <property type="evidence" value="ECO:0007669"/>
    <property type="project" value="UniProtKB-UniRule"/>
</dbReference>
<dbReference type="FunFam" id="4.10.410.60:FF:000001">
    <property type="entry name" value="50S ribosomal protein L35"/>
    <property type="match status" value="1"/>
</dbReference>
<dbReference type="Gene3D" id="4.10.410.60">
    <property type="match status" value="1"/>
</dbReference>
<dbReference type="HAMAP" id="MF_00514">
    <property type="entry name" value="Ribosomal_bL35"/>
    <property type="match status" value="1"/>
</dbReference>
<dbReference type="InterPro" id="IPR001706">
    <property type="entry name" value="Ribosomal_bL35"/>
</dbReference>
<dbReference type="InterPro" id="IPR021137">
    <property type="entry name" value="Ribosomal_bL35-like"/>
</dbReference>
<dbReference type="InterPro" id="IPR018265">
    <property type="entry name" value="Ribosomal_bL35_CS"/>
</dbReference>
<dbReference type="InterPro" id="IPR037229">
    <property type="entry name" value="Ribosomal_bL35_sf"/>
</dbReference>
<dbReference type="NCBIfam" id="TIGR00001">
    <property type="entry name" value="rpmI_bact"/>
    <property type="match status" value="1"/>
</dbReference>
<dbReference type="PANTHER" id="PTHR33343">
    <property type="entry name" value="54S RIBOSOMAL PROTEIN BL35M"/>
    <property type="match status" value="1"/>
</dbReference>
<dbReference type="PANTHER" id="PTHR33343:SF1">
    <property type="entry name" value="LARGE RIBOSOMAL SUBUNIT PROTEIN BL35M"/>
    <property type="match status" value="1"/>
</dbReference>
<dbReference type="Pfam" id="PF01632">
    <property type="entry name" value="Ribosomal_L35p"/>
    <property type="match status" value="1"/>
</dbReference>
<dbReference type="PRINTS" id="PR00064">
    <property type="entry name" value="RIBOSOMALL35"/>
</dbReference>
<dbReference type="SUPFAM" id="SSF143034">
    <property type="entry name" value="L35p-like"/>
    <property type="match status" value="1"/>
</dbReference>
<dbReference type="PROSITE" id="PS00936">
    <property type="entry name" value="RIBOSOMAL_L35"/>
    <property type="match status" value="1"/>
</dbReference>
<comment type="similarity">
    <text evidence="1">Belongs to the bacterial ribosomal protein bL35 family.</text>
</comment>
<organism>
    <name type="scientific">Marinomonas sp. (strain MWYL1)</name>
    <dbReference type="NCBI Taxonomy" id="400668"/>
    <lineage>
        <taxon>Bacteria</taxon>
        <taxon>Pseudomonadati</taxon>
        <taxon>Pseudomonadota</taxon>
        <taxon>Gammaproteobacteria</taxon>
        <taxon>Oceanospirillales</taxon>
        <taxon>Oceanospirillaceae</taxon>
        <taxon>Marinomonas</taxon>
    </lineage>
</organism>
<proteinExistence type="inferred from homology"/>
<keyword id="KW-0687">Ribonucleoprotein</keyword>
<keyword id="KW-0689">Ribosomal protein</keyword>